<reference key="1">
    <citation type="journal article" date="2003" name="Nature">
        <title>The DNA sequence of human chromosome 7.</title>
        <authorList>
            <person name="Hillier L.W."/>
            <person name="Fulton R.S."/>
            <person name="Fulton L.A."/>
            <person name="Graves T.A."/>
            <person name="Pepin K.H."/>
            <person name="Wagner-McPherson C."/>
            <person name="Layman D."/>
            <person name="Maas J."/>
            <person name="Jaeger S."/>
            <person name="Walker R."/>
            <person name="Wylie K."/>
            <person name="Sekhon M."/>
            <person name="Becker M.C."/>
            <person name="O'Laughlin M.D."/>
            <person name="Schaller M.E."/>
            <person name="Fewell G.A."/>
            <person name="Delehaunty K.D."/>
            <person name="Miner T.L."/>
            <person name="Nash W.E."/>
            <person name="Cordes M."/>
            <person name="Du H."/>
            <person name="Sun H."/>
            <person name="Edwards J."/>
            <person name="Bradshaw-Cordum H."/>
            <person name="Ali J."/>
            <person name="Andrews S."/>
            <person name="Isak A."/>
            <person name="Vanbrunt A."/>
            <person name="Nguyen C."/>
            <person name="Du F."/>
            <person name="Lamar B."/>
            <person name="Courtney L."/>
            <person name="Kalicki J."/>
            <person name="Ozersky P."/>
            <person name="Bielicki L."/>
            <person name="Scott K."/>
            <person name="Holmes A."/>
            <person name="Harkins R."/>
            <person name="Harris A."/>
            <person name="Strong C.M."/>
            <person name="Hou S."/>
            <person name="Tomlinson C."/>
            <person name="Dauphin-Kohlberg S."/>
            <person name="Kozlowicz-Reilly A."/>
            <person name="Leonard S."/>
            <person name="Rohlfing T."/>
            <person name="Rock S.M."/>
            <person name="Tin-Wollam A.-M."/>
            <person name="Abbott A."/>
            <person name="Minx P."/>
            <person name="Maupin R."/>
            <person name="Strowmatt C."/>
            <person name="Latreille P."/>
            <person name="Miller N."/>
            <person name="Johnson D."/>
            <person name="Murray J."/>
            <person name="Woessner J.P."/>
            <person name="Wendl M.C."/>
            <person name="Yang S.-P."/>
            <person name="Schultz B.R."/>
            <person name="Wallis J.W."/>
            <person name="Spieth J."/>
            <person name="Bieri T.A."/>
            <person name="Nelson J.O."/>
            <person name="Berkowicz N."/>
            <person name="Wohldmann P.E."/>
            <person name="Cook L.L."/>
            <person name="Hickenbotham M.T."/>
            <person name="Eldred J."/>
            <person name="Williams D."/>
            <person name="Bedell J.A."/>
            <person name="Mardis E.R."/>
            <person name="Clifton S.W."/>
            <person name="Chissoe S.L."/>
            <person name="Marra M.A."/>
            <person name="Raymond C."/>
            <person name="Haugen E."/>
            <person name="Gillett W."/>
            <person name="Zhou Y."/>
            <person name="James R."/>
            <person name="Phelps K."/>
            <person name="Iadanoto S."/>
            <person name="Bubb K."/>
            <person name="Simms E."/>
            <person name="Levy R."/>
            <person name="Clendenning J."/>
            <person name="Kaul R."/>
            <person name="Kent W.J."/>
            <person name="Furey T.S."/>
            <person name="Baertsch R.A."/>
            <person name="Brent M.R."/>
            <person name="Keibler E."/>
            <person name="Flicek P."/>
            <person name="Bork P."/>
            <person name="Suyama M."/>
            <person name="Bailey J.A."/>
            <person name="Portnoy M.E."/>
            <person name="Torrents D."/>
            <person name="Chinwalla A.T."/>
            <person name="Gish W.R."/>
            <person name="Eddy S.R."/>
            <person name="McPherson J.D."/>
            <person name="Olson M.V."/>
            <person name="Eichler E.E."/>
            <person name="Green E.D."/>
            <person name="Waterston R.H."/>
            <person name="Wilson R.K."/>
        </authorList>
    </citation>
    <scope>NUCLEOTIDE SEQUENCE [LARGE SCALE GENOMIC DNA]</scope>
</reference>
<reference key="2">
    <citation type="journal article" date="2003" name="J. Biol. Chem.">
        <title>Initiation of transcription of the MUC3A human intestinal mucin from a TATA-less promoter and comparison with the MUC3B amino terminus.</title>
        <authorList>
            <person name="Gum J.R. Jr."/>
            <person name="Hicks J.W."/>
            <person name="Crawley S.C."/>
            <person name="Dahl C.M."/>
            <person name="Yang S.C."/>
            <person name="Roberton A.M."/>
            <person name="Kim Y.S."/>
        </authorList>
    </citation>
    <scope>NUCLEOTIDE SEQUENCE [GENOMIC DNA] OF 1-340 (ISOFORM 1)</scope>
</reference>
<reference key="3">
    <citation type="journal article" date="1997" name="J. Biol. Chem.">
        <title>MUC3 human intestinal mucin. Analysis of gene structure, the carboxyl terminus, and a novel upstream repetitive region.</title>
        <authorList>
            <person name="Gum J.R. Jr."/>
            <person name="Ho J.J.L."/>
            <person name="Pratt W.S."/>
            <person name="Hicks J.W."/>
            <person name="Hill A.S."/>
            <person name="Vinall L.E."/>
            <person name="Roberton A.M."/>
            <person name="Swallow D.M."/>
            <person name="Kim Y.S."/>
        </authorList>
    </citation>
    <scope>NUCLEOTIDE SEQUENCE [MRNA] OF 1003-1515 AND 1530-1969 (ISOFORM 1)</scope>
    <scope>NUCLEOTIDE SEQUENCE [MRNA] OF 2097-3323 (ISOFORM 2)</scope>
</reference>
<reference key="4">
    <citation type="journal article" date="1999" name="Biochem. Biophys. Res. Commun.">
        <title>Genomic organization and structure of the 3' region of human MUC3: alternative splicing predicts membrane-bound and soluble forms of the mucin.</title>
        <authorList>
            <person name="Crawley S.C."/>
            <person name="Gum J.R. Jr."/>
            <person name="Hicks J.W."/>
            <person name="Pratt W.S."/>
            <person name="Aubert J.-P."/>
            <person name="Swallow D.M."/>
            <person name="Kim Y.S."/>
        </authorList>
    </citation>
    <scope>NUCLEOTIDE SEQUENCE [GENOMIC DNA] OF 2097-3323 (ISOFORM 1)</scope>
    <scope>ALTERNATIVE SPLICING (ISOFORMS 2; 3 AND 4)</scope>
    <scope>VARIANT ASN-3299</scope>
    <scope>SUBCELLULAR LOCATION</scope>
    <source>
        <tissue>Intestine</tissue>
    </source>
</reference>
<reference key="5">
    <citation type="journal article" date="2001" name="J. Hum. Genet.">
        <title>Associations of distinct variants of the intestinal mucin gene MUC3A with ulcerative colitis and Crohn's disease.</title>
        <authorList>
            <person name="Kyo K."/>
            <person name="Muto T."/>
            <person name="Nagawa H."/>
            <person name="Lathrop G.M."/>
            <person name="Nakamura Y."/>
        </authorList>
    </citation>
    <scope>NUCLEOTIDE SEQUENCE [GENOMIC DNA] OF 2447-3323 (ISOFORM 1)</scope>
    <scope>TISSUE SPECIFICITY</scope>
    <scope>VARIANTS ALA-3120; ASN-3299 AND HIS-3299</scope>
</reference>
<reference key="6">
    <citation type="journal article" date="1999" name="Biochem. Biophys. Res. Commun.">
        <title>The MUC3 gene encodes a transmembrane mucin and is alternatively spliced.</title>
        <authorList>
            <person name="Williams S.J."/>
            <person name="Munster D.J."/>
            <person name="Quin R.J."/>
            <person name="Gotley D.C."/>
            <person name="McGuckin M.A."/>
        </authorList>
    </citation>
    <scope>NUCLEOTIDE SEQUENCE [MRNA] OF 2958-3323 (ISOFORMS 1; 2 AND 5)</scope>
    <scope>FUNCTION</scope>
    <source>
        <tissue>Colon mucosa</tissue>
        <tissue>Small intestine</tissue>
    </source>
</reference>
<reference key="7">
    <citation type="journal article" date="1990" name="Biochem. Biophys. Res. Commun.">
        <title>Molecular cloning of cDNAs derived from a novel human intestinal mucin gene.</title>
        <authorList>
            <person name="Gum J.R. Jr."/>
            <person name="Hicks J.W."/>
            <person name="Swallow D.M."/>
            <person name="Lagace R.L."/>
            <person name="Byrd J.C."/>
            <person name="Lamport D.T.A."/>
            <person name="Siddiki B."/>
            <person name="Kim Y.S."/>
        </authorList>
    </citation>
    <scope>PARTIAL NUCLEOTIDE SEQUENCE [MRNA]</scope>
    <source>
        <tissue>Small intestine</tissue>
    </source>
</reference>
<reference key="8">
    <citation type="journal article" date="2008" name="Proc. Natl. Acad. Sci. U.S.A.">
        <title>A quantitative atlas of mitotic phosphorylation.</title>
        <authorList>
            <person name="Dephoure N."/>
            <person name="Zhou C."/>
            <person name="Villen J."/>
            <person name="Beausoleil S.A."/>
            <person name="Bakalarski C.E."/>
            <person name="Elledge S.J."/>
            <person name="Gygi S.P."/>
        </authorList>
    </citation>
    <scope>IDENTIFICATION BY MASS SPECTROMETRY [LARGE SCALE ANALYSIS]</scope>
    <source>
        <tissue>Cervix carcinoma</tissue>
    </source>
</reference>
<comment type="function">
    <text evidence="5">Major glycoprotein component of a variety of mucus gels. Thought to provide a protective, lubricating barrier against particles and infectious agents at mucosal surfaces. May be involved in ligand binding and intracellular signaling.</text>
</comment>
<comment type="subcellular location">
    <molecule>Isoform 1</molecule>
    <subcellularLocation>
        <location>Membrane</location>
        <topology evidence="1">Single-pass membrane protein</topology>
    </subcellularLocation>
</comment>
<comment type="subcellular location">
    <molecule>Isoform 2</molecule>
    <subcellularLocation>
        <location evidence="9">Secreted</location>
    </subcellularLocation>
</comment>
<comment type="subcellular location">
    <molecule>Isoform 3</molecule>
    <subcellularLocation>
        <location evidence="9">Secreted</location>
    </subcellularLocation>
</comment>
<comment type="subcellular location">
    <molecule>Isoform 4</molecule>
    <subcellularLocation>
        <location evidence="9">Secreted</location>
    </subcellularLocation>
</comment>
<comment type="subcellular location">
    <molecule>Isoform 5</molecule>
    <subcellularLocation>
        <location>Secreted</location>
    </subcellularLocation>
</comment>
<comment type="alternative products">
    <event type="alternative splicing"/>
    <isoform>
        <id>Q02505-1</id>
        <name>1</name>
        <sequence type="displayed"/>
    </isoform>
    <isoform>
        <id>Q02505-2</id>
        <name>2</name>
        <sequence type="described" ref="VSP_023229 VSP_023231"/>
    </isoform>
    <isoform>
        <id>Q02505-3</id>
        <name>3</name>
        <sequence type="described" ref="VSP_023230 VSP_023233"/>
    </isoform>
    <isoform>
        <id>Q02505-4</id>
        <name>4</name>
        <sequence type="described" ref="VSP_023232 VSP_023234"/>
    </isoform>
    <isoform>
        <id>Q02505-5</id>
        <name>5</name>
        <sequence type="described" ref="VSP_023235"/>
    </isoform>
    <text>Additional isoforms seem to exist.</text>
</comment>
<comment type="tissue specificity">
    <text evidence="7">Broad specificity; small intestine, colon, colonic tumors, heart, liver, thymus, prostate, pancreas and gall bladder.</text>
</comment>
<comment type="PTM">
    <text>Highly O-glycosylated and probably also N-glycosylated.</text>
</comment>
<comment type="miscellaneous">
    <molecule>Isoform 2</molecule>
    <text evidence="11">May be produced at very low levels due to a premature stop codon in the mRNA, leading to nonsense-mediated mRNA decay.</text>
</comment>
<comment type="sequence caution" evidence="11">
    <conflict type="miscellaneous discrepancy">
        <sequence resource="EMBL-CDS" id="AAA63772"/>
    </conflict>
    <text>This sequence is incomplete at 5' and 3' ends and extensively differs from that shown.</text>
</comment>
<comment type="sequence caution" evidence="11">
    <conflict type="miscellaneous discrepancy">
        <sequence resource="EMBL-CDS" id="AAA63773"/>
    </conflict>
    <text>This sequence is incomplete at 5' and 3' ends and extensively differs from that shown.</text>
</comment>
<comment type="sequence caution" evidence="11">
    <conflict type="frameshift">
        <sequence resource="EMBL-CDS" id="AAC02271"/>
    </conflict>
</comment>
<comment type="online information" name="Mucin database">
    <link uri="http://www.medkem.gu.se/mucinbiology/databases/"/>
</comment>
<evidence type="ECO:0000255" key="1"/>
<evidence type="ECO:0000255" key="2">
    <source>
        <dbReference type="PROSITE-ProRule" id="PRU00076"/>
    </source>
</evidence>
<evidence type="ECO:0000255" key="3">
    <source>
        <dbReference type="PROSITE-ProRule" id="PRU00188"/>
    </source>
</evidence>
<evidence type="ECO:0000256" key="4">
    <source>
        <dbReference type="SAM" id="MobiDB-lite"/>
    </source>
</evidence>
<evidence type="ECO:0000269" key="5">
    <source>
    </source>
</evidence>
<evidence type="ECO:0000269" key="6">
    <source>
    </source>
</evidence>
<evidence type="ECO:0000269" key="7">
    <source>
    </source>
</evidence>
<evidence type="ECO:0000303" key="8">
    <source>
    </source>
</evidence>
<evidence type="ECO:0000303" key="9">
    <source>
    </source>
</evidence>
<evidence type="ECO:0000303" key="10">
    <source>
    </source>
</evidence>
<evidence type="ECO:0000305" key="11"/>
<evidence type="ECO:0000305" key="12">
    <source>
    </source>
</evidence>
<evidence type="ECO:0000305" key="13">
    <source>
    </source>
</evidence>
<evidence type="ECO:0000312" key="14">
    <source>
        <dbReference type="HGNC" id="HGNC:7513"/>
    </source>
</evidence>
<protein>
    <recommendedName>
        <fullName evidence="11">Mucin-3A</fullName>
        <shortName evidence="11">MUC-3A</shortName>
    </recommendedName>
    <alternativeName>
        <fullName evidence="13">Intestinal mucin-3A</fullName>
    </alternativeName>
</protein>
<feature type="signal peptide" evidence="1">
    <location>
        <begin position="1"/>
        <end position="15"/>
    </location>
</feature>
<feature type="chain" id="PRO_0000158955" description="Mucin-3A">
    <location>
        <begin position="16"/>
        <end position="3323"/>
    </location>
</feature>
<feature type="transmembrane region" description="Helical" evidence="1">
    <location>
        <begin position="3227"/>
        <end position="3247"/>
    </location>
</feature>
<feature type="repeat" description="1">
    <location>
        <begin position="1893"/>
        <end position="1910"/>
    </location>
</feature>
<feature type="repeat" description="2">
    <location>
        <begin position="1911"/>
        <end position="1927"/>
    </location>
</feature>
<feature type="repeat" description="3">
    <location>
        <begin position="1928"/>
        <end position="1944"/>
    </location>
</feature>
<feature type="repeat" description="4">
    <location>
        <begin position="1945"/>
        <end position="1961"/>
    </location>
</feature>
<feature type="repeat" description="5">
    <location>
        <begin position="1962"/>
        <end position="1978"/>
    </location>
</feature>
<feature type="repeat" description="6">
    <location>
        <begin position="1979"/>
        <end position="1995"/>
    </location>
</feature>
<feature type="repeat" description="7">
    <location>
        <begin position="1996"/>
        <end position="2012"/>
    </location>
</feature>
<feature type="repeat" description="8">
    <location>
        <begin position="2013"/>
        <end position="2029"/>
    </location>
</feature>
<feature type="repeat" description="9">
    <location>
        <begin position="2030"/>
        <end position="2046"/>
    </location>
</feature>
<feature type="repeat" description="10">
    <location>
        <begin position="2047"/>
        <end position="2062"/>
    </location>
</feature>
<feature type="repeat" description="11">
    <location>
        <begin position="2063"/>
        <end position="2079"/>
    </location>
</feature>
<feature type="repeat" description="12">
    <location>
        <begin position="2080"/>
        <end position="2096"/>
    </location>
</feature>
<feature type="repeat" description="13">
    <location>
        <begin position="2097"/>
        <end position="2113"/>
    </location>
</feature>
<feature type="repeat" description="14">
    <location>
        <begin position="2114"/>
        <end position="2130"/>
    </location>
</feature>
<feature type="repeat" description="15">
    <location>
        <begin position="2131"/>
        <end position="2147"/>
    </location>
</feature>
<feature type="repeat" description="16">
    <location>
        <begin position="2148"/>
        <end position="2164"/>
    </location>
</feature>
<feature type="repeat" description="17">
    <location>
        <begin position="2165"/>
        <end position="2191"/>
    </location>
</feature>
<feature type="repeat" description="18">
    <location>
        <begin position="2192"/>
        <end position="2208"/>
    </location>
</feature>
<feature type="repeat" description="19">
    <location>
        <begin position="2209"/>
        <end position="2225"/>
    </location>
</feature>
<feature type="repeat" description="20">
    <location>
        <begin position="2226"/>
        <end position="2242"/>
    </location>
</feature>
<feature type="repeat" description="21">
    <location>
        <begin position="2243"/>
        <end position="2259"/>
    </location>
</feature>
<feature type="repeat" description="22">
    <location>
        <begin position="2260"/>
        <end position="2276"/>
    </location>
</feature>
<feature type="repeat" description="23">
    <location>
        <begin position="2277"/>
        <end position="2293"/>
    </location>
</feature>
<feature type="repeat" description="24">
    <location>
        <begin position="2294"/>
        <end position="2310"/>
    </location>
</feature>
<feature type="repeat" description="25">
    <location>
        <begin position="2311"/>
        <end position="2327"/>
    </location>
</feature>
<feature type="repeat" description="26">
    <location>
        <begin position="2328"/>
        <end position="2344"/>
    </location>
</feature>
<feature type="repeat" description="27">
    <location>
        <begin position="2345"/>
        <end position="2361"/>
    </location>
</feature>
<feature type="repeat" description="28">
    <location>
        <begin position="2362"/>
        <end position="2378"/>
    </location>
</feature>
<feature type="repeat" description="29">
    <location>
        <begin position="2379"/>
        <end position="2395"/>
    </location>
</feature>
<feature type="repeat" description="30">
    <location>
        <begin position="2396"/>
        <end position="2412"/>
    </location>
</feature>
<feature type="repeat" description="31">
    <location>
        <begin position="2413"/>
        <end position="2429"/>
    </location>
</feature>
<feature type="repeat" description="32">
    <location>
        <begin position="2430"/>
        <end position="2446"/>
    </location>
</feature>
<feature type="domain" description="EGF-like" evidence="2">
    <location>
        <begin position="2976"/>
        <end position="3009"/>
    </location>
</feature>
<feature type="domain" description="SEA" evidence="3">
    <location>
        <begin position="3018"/>
        <end position="3143"/>
    </location>
</feature>
<feature type="region of interest" description="Disordered" evidence="4">
    <location>
        <begin position="218"/>
        <end position="243"/>
    </location>
</feature>
<feature type="region of interest" description="Disordered" evidence="4">
    <location>
        <begin position="270"/>
        <end position="289"/>
    </location>
</feature>
<feature type="region of interest" description="Disordered" evidence="4">
    <location>
        <begin position="325"/>
        <end position="345"/>
    </location>
</feature>
<feature type="region of interest" description="Disordered" evidence="4">
    <location>
        <begin position="359"/>
        <end position="380"/>
    </location>
</feature>
<feature type="region of interest" description="Disordered" evidence="4">
    <location>
        <begin position="539"/>
        <end position="677"/>
    </location>
</feature>
<feature type="region of interest" description="Disordered" evidence="4">
    <location>
        <begin position="700"/>
        <end position="722"/>
    </location>
</feature>
<feature type="region of interest" description="Disordered" evidence="4">
    <location>
        <begin position="734"/>
        <end position="756"/>
    </location>
</feature>
<feature type="region of interest" description="Disordered" evidence="4">
    <location>
        <begin position="909"/>
        <end position="991"/>
    </location>
</feature>
<feature type="region of interest" description="Disordered" evidence="4">
    <location>
        <begin position="1170"/>
        <end position="1201"/>
    </location>
</feature>
<feature type="region of interest" description="Disordered" evidence="4">
    <location>
        <begin position="1318"/>
        <end position="1356"/>
    </location>
</feature>
<feature type="region of interest" description="Disordered" evidence="4">
    <location>
        <begin position="1380"/>
        <end position="1442"/>
    </location>
</feature>
<feature type="region of interest" description="Disordered" evidence="4">
    <location>
        <begin position="1484"/>
        <end position="1509"/>
    </location>
</feature>
<feature type="region of interest" description="Disordered" evidence="4">
    <location>
        <begin position="1714"/>
        <end position="1746"/>
    </location>
</feature>
<feature type="region of interest" description="Disordered" evidence="4">
    <location>
        <begin position="1793"/>
        <end position="1844"/>
    </location>
</feature>
<feature type="region of interest" description="32 X approximate tandem repeats, Ser/Thr-rich">
    <location>
        <begin position="1893"/>
        <end position="2446"/>
    </location>
</feature>
<feature type="region of interest" description="Disordered" evidence="4">
    <location>
        <begin position="1900"/>
        <end position="2056"/>
    </location>
</feature>
<feature type="region of interest" description="Disordered" evidence="4">
    <location>
        <begin position="2100"/>
        <end position="2447"/>
    </location>
</feature>
<feature type="region of interest" description="Disordered" evidence="4">
    <location>
        <begin position="2464"/>
        <end position="2508"/>
    </location>
</feature>
<feature type="region of interest" description="Disordered" evidence="4">
    <location>
        <begin position="2578"/>
        <end position="2608"/>
    </location>
</feature>
<feature type="region of interest" description="Disordered" evidence="4">
    <location>
        <begin position="2631"/>
        <end position="2656"/>
    </location>
</feature>
<feature type="region of interest" description="Disordered" evidence="4">
    <location>
        <begin position="2834"/>
        <end position="2858"/>
    </location>
</feature>
<feature type="region of interest" description="Disordered" evidence="4">
    <location>
        <begin position="2897"/>
        <end position="2937"/>
    </location>
</feature>
<feature type="compositionally biased region" description="Low complexity" evidence="4">
    <location>
        <begin position="270"/>
        <end position="284"/>
    </location>
</feature>
<feature type="compositionally biased region" description="Polar residues" evidence="4">
    <location>
        <begin position="545"/>
        <end position="563"/>
    </location>
</feature>
<feature type="compositionally biased region" description="Low complexity" evidence="4">
    <location>
        <begin position="564"/>
        <end position="618"/>
    </location>
</feature>
<feature type="compositionally biased region" description="Polar residues" evidence="4">
    <location>
        <begin position="619"/>
        <end position="629"/>
    </location>
</feature>
<feature type="compositionally biased region" description="Low complexity" evidence="4">
    <location>
        <begin position="630"/>
        <end position="676"/>
    </location>
</feature>
<feature type="compositionally biased region" description="Polar residues" evidence="4">
    <location>
        <begin position="700"/>
        <end position="721"/>
    </location>
</feature>
<feature type="compositionally biased region" description="Low complexity" evidence="4">
    <location>
        <begin position="909"/>
        <end position="918"/>
    </location>
</feature>
<feature type="compositionally biased region" description="Polar residues" evidence="4">
    <location>
        <begin position="919"/>
        <end position="932"/>
    </location>
</feature>
<feature type="compositionally biased region" description="Low complexity" evidence="4">
    <location>
        <begin position="933"/>
        <end position="991"/>
    </location>
</feature>
<feature type="compositionally biased region" description="Low complexity" evidence="4">
    <location>
        <begin position="1324"/>
        <end position="1356"/>
    </location>
</feature>
<feature type="compositionally biased region" description="Polar residues" evidence="4">
    <location>
        <begin position="1907"/>
        <end position="1947"/>
    </location>
</feature>
<feature type="compositionally biased region" description="Low complexity" evidence="4">
    <location>
        <begin position="1948"/>
        <end position="2056"/>
    </location>
</feature>
<feature type="compositionally biased region" description="Low complexity" evidence="4">
    <location>
        <begin position="2100"/>
        <end position="2170"/>
    </location>
</feature>
<feature type="compositionally biased region" description="Low complexity" evidence="4">
    <location>
        <begin position="2177"/>
        <end position="2384"/>
    </location>
</feature>
<feature type="compositionally biased region" description="Low complexity" evidence="4">
    <location>
        <begin position="2393"/>
        <end position="2447"/>
    </location>
</feature>
<feature type="compositionally biased region" description="Low complexity" evidence="4">
    <location>
        <begin position="2464"/>
        <end position="2507"/>
    </location>
</feature>
<feature type="compositionally biased region" description="Polar residues" evidence="4">
    <location>
        <begin position="2578"/>
        <end position="2602"/>
    </location>
</feature>
<feature type="compositionally biased region" description="Low complexity" evidence="4">
    <location>
        <begin position="2633"/>
        <end position="2656"/>
    </location>
</feature>
<feature type="compositionally biased region" description="Low complexity" evidence="4">
    <location>
        <begin position="2834"/>
        <end position="2849"/>
    </location>
</feature>
<feature type="compositionally biased region" description="Low complexity" evidence="4">
    <location>
        <begin position="2905"/>
        <end position="2937"/>
    </location>
</feature>
<feature type="disulfide bond" evidence="2">
    <location>
        <begin position="2980"/>
        <end position="2986"/>
    </location>
</feature>
<feature type="disulfide bond" evidence="2">
    <location>
        <begin position="2999"/>
        <end position="3008"/>
    </location>
</feature>
<feature type="splice variant" id="VSP_023229" description="In isoform 2." evidence="8 10">
    <original>VVETEVGMEVSVDQQFSPDLNDNTSQAYRDFNKTFWNQMQKIFAD</original>
    <variation>AEDFCRHAGLHLQGCGDPVPEEWQHRGGLPGPAGDALQPPAGERV</variation>
    <location>
        <begin position="3019"/>
        <end position="3063"/>
    </location>
</feature>
<feature type="splice variant" id="VSP_023230" description="In isoform 3." evidence="12">
    <original>MQKIFADMQGFTFKGVEILSLRNG</original>
    <variation>EWQHRGGLPGPAGDALQPPAGERV</variation>
    <location>
        <begin position="3057"/>
        <end position="3080"/>
    </location>
</feature>
<feature type="splice variant" id="VSP_023231" description="In isoform 2." evidence="8 10">
    <location>
        <begin position="3064"/>
        <end position="3323"/>
    </location>
</feature>
<feature type="splice variant" id="VSP_023232" description="In isoform 4." evidence="12">
    <original>RNGS</original>
    <variation>SPVF</variation>
    <location>
        <begin position="3078"/>
        <end position="3081"/>
    </location>
</feature>
<feature type="splice variant" id="VSP_023233" description="In isoform 3." evidence="12">
    <location>
        <begin position="3081"/>
        <end position="3323"/>
    </location>
</feature>
<feature type="splice variant" id="VSP_023234" description="In isoform 4." evidence="12">
    <location>
        <begin position="3082"/>
        <end position="3323"/>
    </location>
</feature>
<feature type="splice variant" id="VSP_023235" description="In isoform 5." evidence="8">
    <location>
        <begin position="3204"/>
        <end position="3261"/>
    </location>
</feature>
<feature type="sequence variant" id="VAR_030722" description="In dbSNP:rs6960868." evidence="7">
    <original>V</original>
    <variation>A</variation>
    <location>
        <position position="3120"/>
    </location>
</feature>
<feature type="sequence variant" id="VAR_030724" description="In dbSNP:rs10258821." evidence="7">
    <original>Y</original>
    <variation>H</variation>
    <location>
        <position position="3299"/>
    </location>
</feature>
<feature type="sequence variant" id="VAR_030723" description="In dbSNP:rs10258821." evidence="6 7">
    <original>Y</original>
    <variation>N</variation>
    <location>
        <position position="3299"/>
    </location>
</feature>
<feature type="sequence conflict" description="In Ref. 1; AAQ73824." evidence="11" ref="1">
    <original>P</original>
    <variation>S</variation>
    <location>
        <position position="258"/>
    </location>
</feature>
<feature type="sequence conflict" description="In Ref. 1; AAQ73824." evidence="11" ref="1">
    <original>T</original>
    <variation>P</variation>
    <location>
        <position position="337"/>
    </location>
</feature>
<feature type="sequence conflict" description="In Ref. 3; AAC02268." evidence="11" ref="3">
    <original>L</original>
    <variation>H</variation>
    <location>
        <position position="1149"/>
    </location>
</feature>
<feature type="sequence conflict" description="In Ref. 3; AAC02268." evidence="11" ref="3">
    <original>T</original>
    <variation>K</variation>
    <location>
        <position position="1234"/>
    </location>
</feature>
<feature type="sequence conflict" description="In Ref. 3; AAC02271." evidence="11" ref="3">
    <original>P</original>
    <variation>L</variation>
    <location>
        <position position="1542"/>
    </location>
</feature>
<feature type="sequence conflict" description="In Ref. 3; AAC02271." evidence="11" ref="3">
    <original>G</original>
    <variation>D</variation>
    <location>
        <position position="1570"/>
    </location>
</feature>
<feature type="sequence conflict" description="In Ref. 3; AAC02271." evidence="11" ref="3">
    <original>S</original>
    <variation>T</variation>
    <location>
        <position position="1587"/>
    </location>
</feature>
<feature type="sequence conflict" description="In Ref. 3; AAC02271." evidence="11" ref="3">
    <original>P</original>
    <variation>S</variation>
    <location>
        <position position="1640"/>
    </location>
</feature>
<feature type="sequence conflict" description="In Ref. 3; AAC02271." evidence="11" ref="3">
    <original>ETTS</original>
    <variation>DSIV</variation>
    <location>
        <begin position="1966"/>
        <end position="1969"/>
    </location>
</feature>
<feature type="sequence conflict" description="In Ref. 4; AAF13032 and 3; AAC02272." evidence="11" ref="4 3">
    <original>T</original>
    <variation>I</variation>
    <location>
        <position position="2099"/>
    </location>
</feature>
<feature type="sequence conflict" description="In Ref. 3; AAC02272 and 4; AAF13032." evidence="11" ref="3 4">
    <original>F</original>
    <variation>Y</variation>
    <location>
        <position position="2110"/>
    </location>
</feature>
<feature type="sequence conflict" description="In Ref. 3; AAC02272 and 4; AAF13032." evidence="11" ref="3 4">
    <original>S</original>
    <variation>T</variation>
    <location>
        <position position="2112"/>
    </location>
</feature>
<feature type="sequence conflict" description="In Ref. 3; AAC02272 and 4; AAF13032." evidence="11" ref="3 4">
    <original>S</original>
    <variation>T</variation>
    <location>
        <position position="2117"/>
    </location>
</feature>
<feature type="sequence conflict" description="In Ref. 3; AAC02272 and 4; AAF13032." evidence="11" ref="3 4">
    <original>M</original>
    <variation>T</variation>
    <location>
        <position position="2119"/>
    </location>
</feature>
<feature type="sequence conflict" description="In Ref. 3; AAC02272 and 4; AAF13032." evidence="11" ref="3 4">
    <original>F</original>
    <variation>Y</variation>
    <location>
        <position position="2127"/>
    </location>
</feature>
<feature type="sequence conflict" description="In Ref. 3; AAC02272 and 4; AAF13032." evidence="11" ref="3 4">
    <original>S</original>
    <variation>T</variation>
    <location>
        <position position="2129"/>
    </location>
</feature>
<feature type="sequence conflict" description="In Ref. 3; AAC02272 and 4; AAF13032." evidence="11" ref="3 4">
    <original>NAT</original>
    <variation>TPS</variation>
    <location>
        <begin position="2136"/>
        <end position="2138"/>
    </location>
</feature>
<feature type="sequence conflict" description="In Ref. 3; AAC02272 and 4; AAF13032." evidence="11" ref="3 4">
    <original>N</original>
    <variation>S</variation>
    <location>
        <position position="2143"/>
    </location>
</feature>
<feature type="sequence conflict" description="In Ref. 3; AAC02272 and 4; AAF13032." evidence="11" ref="3 4">
    <original>LIT</original>
    <variation>SIR</variation>
    <location>
        <begin position="2164"/>
        <end position="2166"/>
    </location>
</feature>
<feature type="sequence conflict" description="In Ref. 3; AAC02272 and 4; AAF13032." evidence="11" ref="3 4">
    <location>
        <begin position="2169"/>
        <end position="2178"/>
    </location>
</feature>
<feature type="sequence conflict" description="In Ref. 3; AAC02272 and 4; AAF13032." evidence="11" ref="3 4">
    <original>H</original>
    <variation>R</variation>
    <location>
        <position position="2322"/>
    </location>
</feature>
<feature type="sequence conflict" description="In Ref. 3; AAC02272." evidence="11" ref="3">
    <original>T</original>
    <variation>P</variation>
    <location>
        <position position="2393"/>
    </location>
</feature>
<feature type="sequence conflict" description="In Ref. 5; BAB12116." evidence="11" ref="5">
    <original>G</original>
    <variation>GC</variation>
    <location>
        <position position="2956"/>
    </location>
</feature>
<name>MUC3A_HUMAN</name>
<proteinExistence type="evidence at protein level"/>
<gene>
    <name evidence="14" type="primary">MUC3A</name>
    <name evidence="8" type="synonym">MUC3</name>
</gene>
<accession>Q02505</accession>
<accession>A6NP22</accession>
<accession>O14650</accession>
<accession>O14651</accession>
<accession>O43418</accession>
<accession>O43421</accession>
<accession>Q02506</accession>
<accession>Q6W763</accession>
<accession>Q9H3Q7</accession>
<accession>Q9UKW9</accession>
<accession>Q9UN93</accession>
<accession>Q9UN94</accession>
<accession>Q9UN95</accession>
<keyword id="KW-0025">Alternative splicing</keyword>
<keyword id="KW-1015">Disulfide bond</keyword>
<keyword id="KW-0245">EGF-like domain</keyword>
<keyword id="KW-0325">Glycoprotein</keyword>
<keyword id="KW-0472">Membrane</keyword>
<keyword id="KW-1267">Proteomics identification</keyword>
<keyword id="KW-1185">Reference proteome</keyword>
<keyword id="KW-0677">Repeat</keyword>
<keyword id="KW-0964">Secreted</keyword>
<keyword id="KW-0732">Signal</keyword>
<keyword id="KW-0812">Transmembrane</keyword>
<keyword id="KW-1133">Transmembrane helix</keyword>
<organism>
    <name type="scientific">Homo sapiens</name>
    <name type="common">Human</name>
    <dbReference type="NCBI Taxonomy" id="9606"/>
    <lineage>
        <taxon>Eukaryota</taxon>
        <taxon>Metazoa</taxon>
        <taxon>Chordata</taxon>
        <taxon>Craniata</taxon>
        <taxon>Vertebrata</taxon>
        <taxon>Euteleostomi</taxon>
        <taxon>Mammalia</taxon>
        <taxon>Eutheria</taxon>
        <taxon>Euarchontoglires</taxon>
        <taxon>Primates</taxon>
        <taxon>Haplorrhini</taxon>
        <taxon>Catarrhini</taxon>
        <taxon>Hominidae</taxon>
        <taxon>Homo</taxon>
    </lineage>
</organism>
<dbReference type="EMBL" id="AC105446">
    <property type="status" value="NOT_ANNOTATED_CDS"/>
    <property type="molecule type" value="Genomic_DNA"/>
</dbReference>
<dbReference type="EMBL" id="AC118759">
    <property type="status" value="NOT_ANNOTATED_CDS"/>
    <property type="molecule type" value="Genomic_DNA"/>
</dbReference>
<dbReference type="EMBL" id="AC254629">
    <property type="status" value="NOT_ANNOTATED_CDS"/>
    <property type="molecule type" value="Genomic_DNA"/>
</dbReference>
<dbReference type="EMBL" id="AY307930">
    <property type="protein sequence ID" value="AAQ73824.1"/>
    <property type="molecule type" value="Genomic_DNA"/>
</dbReference>
<dbReference type="EMBL" id="AF007190">
    <property type="protein sequence ID" value="AAC02268.1"/>
    <property type="molecule type" value="mRNA"/>
</dbReference>
<dbReference type="EMBL" id="AF007193">
    <property type="protein sequence ID" value="AAC02271.1"/>
    <property type="status" value="ALT_FRAME"/>
    <property type="molecule type" value="mRNA"/>
</dbReference>
<dbReference type="EMBL" id="AF007194">
    <property type="protein sequence ID" value="AAC02272.1"/>
    <property type="molecule type" value="mRNA"/>
</dbReference>
<dbReference type="EMBL" id="AF113616">
    <property type="protein sequence ID" value="AAF13032.1"/>
    <property type="molecule type" value="Genomic_DNA"/>
</dbReference>
<dbReference type="EMBL" id="AB038782">
    <property type="protein sequence ID" value="BAB12116.1"/>
    <property type="molecule type" value="Genomic_DNA"/>
</dbReference>
<dbReference type="EMBL" id="AF143371">
    <property type="protein sequence ID" value="AAD45882.1"/>
    <property type="molecule type" value="mRNA"/>
</dbReference>
<dbReference type="EMBL" id="AF143372">
    <property type="protein sequence ID" value="AAD45883.1"/>
    <property type="molecule type" value="mRNA"/>
</dbReference>
<dbReference type="EMBL" id="AF143373">
    <property type="protein sequence ID" value="AAD45884.1"/>
    <property type="molecule type" value="mRNA"/>
</dbReference>
<dbReference type="EMBL" id="M55405">
    <property type="protein sequence ID" value="AAA63772.1"/>
    <property type="status" value="ALT_SEQ"/>
    <property type="molecule type" value="mRNA"/>
</dbReference>
<dbReference type="EMBL" id="M55406">
    <property type="protein sequence ID" value="AAA63773.1"/>
    <property type="status" value="ALT_SEQ"/>
    <property type="molecule type" value="mRNA"/>
</dbReference>
<dbReference type="CCDS" id="CCDS78262.1">
    <molecule id="Q02505-1"/>
</dbReference>
<dbReference type="PIR" id="A35690">
    <property type="entry name" value="A35690"/>
</dbReference>
<dbReference type="PIR" id="B35690">
    <property type="entry name" value="B35690"/>
</dbReference>
<dbReference type="RefSeq" id="NP_005951.1">
    <molecule id="Q02505-1"/>
    <property type="nucleotide sequence ID" value="NM_005960.2"/>
</dbReference>
<dbReference type="FunCoup" id="Q02505">
    <property type="interactions" value="5"/>
</dbReference>
<dbReference type="IntAct" id="Q02505">
    <property type="interactions" value="1"/>
</dbReference>
<dbReference type="STRING" id="9606.ENSP00000368771"/>
<dbReference type="MEROPS" id="S71.002"/>
<dbReference type="GlyGen" id="Q02505">
    <property type="glycosylation" value="35 sites, 1 O-linked glycan (21 sites)"/>
</dbReference>
<dbReference type="iPTMnet" id="Q02505"/>
<dbReference type="PhosphoSitePlus" id="Q02505"/>
<dbReference type="BioMuta" id="MUC3A"/>
<dbReference type="DMDM" id="126302571"/>
<dbReference type="jPOST" id="Q02505"/>
<dbReference type="MassIVE" id="Q02505"/>
<dbReference type="PaxDb" id="9606-ENSP00000368771"/>
<dbReference type="PeptideAtlas" id="Q02505"/>
<dbReference type="Antibodypedia" id="1458">
    <property type="antibodies" value="394 antibodies from 21 providers"/>
</dbReference>
<dbReference type="DNASU" id="4584"/>
<dbReference type="Ensembl" id="ENST00000379458.9">
    <molecule id="Q02505-1"/>
    <property type="protein sequence ID" value="ENSP00000368771.5"/>
    <property type="gene ID" value="ENSG00000169894.18"/>
</dbReference>
<dbReference type="Ensembl" id="ENST00000483366.5">
    <molecule id="Q02505-5"/>
    <property type="protein sequence ID" value="ENSP00000483541.1"/>
    <property type="gene ID" value="ENSG00000169894.18"/>
</dbReference>
<dbReference type="GeneID" id="4584"/>
<dbReference type="KEGG" id="hsa:4584"/>
<dbReference type="MANE-Select" id="ENST00000379458.9">
    <property type="protein sequence ID" value="ENSP00000368771.5"/>
    <property type="RefSeq nucleotide sequence ID" value="NM_005960.2"/>
    <property type="RefSeq protein sequence ID" value="NP_005951.1"/>
</dbReference>
<dbReference type="UCSC" id="uc033aad.2">
    <property type="organism name" value="human"/>
</dbReference>
<dbReference type="UCSC" id="uc064gjo.1">
    <molecule id="Q02505-1"/>
    <property type="organism name" value="human"/>
</dbReference>
<dbReference type="AGR" id="HGNC:7513"/>
<dbReference type="CTD" id="4584"/>
<dbReference type="DisGeNET" id="4584"/>
<dbReference type="GeneCards" id="MUC3A"/>
<dbReference type="HGNC" id="HGNC:7513">
    <property type="gene designation" value="MUC3A"/>
</dbReference>
<dbReference type="HPA" id="ENSG00000169894">
    <property type="expression patterns" value="Tissue enhanced (gallbladder, intestine)"/>
</dbReference>
<dbReference type="MIM" id="158371">
    <property type="type" value="gene"/>
</dbReference>
<dbReference type="neXtProt" id="NX_Q02505"/>
<dbReference type="OpenTargets" id="ENSG00000169894"/>
<dbReference type="VEuPathDB" id="HostDB:ENSG00000169894"/>
<dbReference type="eggNOG" id="ENOG502SKUJ">
    <property type="taxonomic scope" value="Eukaryota"/>
</dbReference>
<dbReference type="GeneTree" id="ENSGT00940000154419"/>
<dbReference type="HOGENOM" id="CLU_299695_0_0_1"/>
<dbReference type="InParanoid" id="Q02505"/>
<dbReference type="OMA" id="PSGNWTF"/>
<dbReference type="OrthoDB" id="9540266at2759"/>
<dbReference type="PAN-GO" id="Q02505">
    <property type="GO annotations" value="0 GO annotations based on evolutionary models"/>
</dbReference>
<dbReference type="PathwayCommons" id="Q02505"/>
<dbReference type="Reactome" id="R-HSA-5083625">
    <property type="pathway name" value="Defective GALNT3 causes HFTC"/>
</dbReference>
<dbReference type="Reactome" id="R-HSA-5083632">
    <property type="pathway name" value="Defective C1GALT1C1 causes TNPS"/>
</dbReference>
<dbReference type="Reactome" id="R-HSA-5083636">
    <property type="pathway name" value="Defective GALNT12 causes CRCS1"/>
</dbReference>
<dbReference type="Reactome" id="R-HSA-5621480">
    <property type="pathway name" value="Dectin-2 family"/>
</dbReference>
<dbReference type="Reactome" id="R-HSA-913709">
    <property type="pathway name" value="O-linked glycosylation of mucins"/>
</dbReference>
<dbReference type="Reactome" id="R-HSA-977068">
    <property type="pathway name" value="Termination of O-glycan biosynthesis"/>
</dbReference>
<dbReference type="SignaLink" id="Q02505"/>
<dbReference type="BioGRID-ORCS" id="4584">
    <property type="hits" value="1 hit in 188 CRISPR screens"/>
</dbReference>
<dbReference type="ChiTaRS" id="MUC3A">
    <property type="organism name" value="human"/>
</dbReference>
<dbReference type="GenomeRNAi" id="4584"/>
<dbReference type="Pharos" id="Q02505">
    <property type="development level" value="Tbio"/>
</dbReference>
<dbReference type="PRO" id="PR:Q02505"/>
<dbReference type="Proteomes" id="UP000005640">
    <property type="component" value="Chromosome 7"/>
</dbReference>
<dbReference type="RNAct" id="Q02505">
    <property type="molecule type" value="protein"/>
</dbReference>
<dbReference type="Bgee" id="ENSG00000169894">
    <property type="expression patterns" value="Expressed in mucosa of transverse colon and 118 other cell types or tissues"/>
</dbReference>
<dbReference type="ExpressionAtlas" id="Q02505">
    <property type="expression patterns" value="baseline and differential"/>
</dbReference>
<dbReference type="GO" id="GO:0005576">
    <property type="term" value="C:extracellular region"/>
    <property type="evidence" value="ECO:0000303"/>
    <property type="project" value="UniProtKB"/>
</dbReference>
<dbReference type="GO" id="GO:0005796">
    <property type="term" value="C:Golgi lumen"/>
    <property type="evidence" value="ECO:0000304"/>
    <property type="project" value="Reactome"/>
</dbReference>
<dbReference type="GO" id="GO:0016020">
    <property type="term" value="C:membrane"/>
    <property type="evidence" value="ECO:0000303"/>
    <property type="project" value="UniProtKB"/>
</dbReference>
<dbReference type="GO" id="GO:0005886">
    <property type="term" value="C:plasma membrane"/>
    <property type="evidence" value="ECO:0000304"/>
    <property type="project" value="Reactome"/>
</dbReference>
<dbReference type="GO" id="GO:0030197">
    <property type="term" value="F:extracellular matrix constituent, lubricant activity"/>
    <property type="evidence" value="ECO:0000303"/>
    <property type="project" value="UniProtKB"/>
</dbReference>
<dbReference type="GO" id="GO:0005201">
    <property type="term" value="F:extracellular matrix structural constituent"/>
    <property type="evidence" value="ECO:0000303"/>
    <property type="project" value="UniProtKB"/>
</dbReference>
<dbReference type="CDD" id="cd00055">
    <property type="entry name" value="EGF_Lam"/>
    <property type="match status" value="1"/>
</dbReference>
<dbReference type="Gene3D" id="2.10.25.10">
    <property type="entry name" value="Laminin"/>
    <property type="match status" value="1"/>
</dbReference>
<dbReference type="InterPro" id="IPR000742">
    <property type="entry name" value="EGF-like_dom"/>
</dbReference>
<dbReference type="InterPro" id="IPR002049">
    <property type="entry name" value="LE_dom"/>
</dbReference>
<dbReference type="InterPro" id="IPR052504">
    <property type="entry name" value="Mucin_signaling_protection"/>
</dbReference>
<dbReference type="InterPro" id="IPR000082">
    <property type="entry name" value="SEA_dom"/>
</dbReference>
<dbReference type="InterPro" id="IPR036364">
    <property type="entry name" value="SEA_dom_sf"/>
</dbReference>
<dbReference type="PANTHER" id="PTHR24041">
    <property type="entry name" value="MUCIN"/>
    <property type="match status" value="1"/>
</dbReference>
<dbReference type="PANTHER" id="PTHR24041:SF22">
    <property type="entry name" value="MUCIN-3A-RELATED"/>
    <property type="match status" value="1"/>
</dbReference>
<dbReference type="SMART" id="SM00181">
    <property type="entry name" value="EGF"/>
    <property type="match status" value="2"/>
</dbReference>
<dbReference type="SMART" id="SM00200">
    <property type="entry name" value="SEA"/>
    <property type="match status" value="1"/>
</dbReference>
<dbReference type="SUPFAM" id="SSF82671">
    <property type="entry name" value="SEA domain"/>
    <property type="match status" value="1"/>
</dbReference>
<dbReference type="PROSITE" id="PS00022">
    <property type="entry name" value="EGF_1"/>
    <property type="match status" value="2"/>
</dbReference>
<dbReference type="PROSITE" id="PS01186">
    <property type="entry name" value="EGF_2"/>
    <property type="match status" value="1"/>
</dbReference>
<dbReference type="PROSITE" id="PS50026">
    <property type="entry name" value="EGF_3"/>
    <property type="match status" value="1"/>
</dbReference>
<dbReference type="PROSITE" id="PS50024">
    <property type="entry name" value="SEA"/>
    <property type="match status" value="1"/>
</dbReference>
<sequence>MQLLGLLGLLWMLKASPWATGTLSTATSISQVPFPRAEAASAVLSNSPHSRDLAGWPLGVPQLASPAPGHRENAPMTLTTSPHDTLISETLLNSPVSSNTSTTPTSKFAFKVETTPPTVLVYSATTECVYPTSFIITISHPTSICVTTTQVAFTSSYTSTPVTQKPVTTVTSTYSMTTTEKGTSAMTSSPSTTTARETPIVTVTPSSVSATDTTFHTTISSTTRTTERTPLPTGSIHTTTSPTPVFTTLKTAVTSTSPITSSITSTNTVTSMTTTASQPTATNTLSSPTRTILSSTPVLSTETITSGITNTTPLSTLVTTLPTTISRSTPTSETTYTTSPTSTVTDSTTKIAYSTSMTGTLSTETSLPPTSSSLPTTETATTPMTNLVTTTTEISSHSTPSFSSSTIYSTVSTSTTAISSLPPTSGTMVTSTTMTPSSLSTDIPFTTPTTITHHSVGSTGFLTTATDLTSTFTVSSSSAMSTSVIPSSPSIQNTETSSLVSMTSATTPNVRPTFVSTLSTPTSSLLTTFPATYSFSSSMSASSAGTTHTESISSPPASTSTLHTTAESTLAPTTTTSFTTSTTMEPPSTTAATTGTGQTTFTSSTATFPETTTPTPTTDMSTESLTTAMTSPPITSSVTSTNTVTSMTTTTSPPTTTNSFTSLTSMPLSSTPVPSTEVVTSGTINTIPPSILVTTLPTPNASSMTTSETTYPNSPTGPGTNSTTEITYPTTMTETSSTATSLPPTSPLVSTAKTAKTPTTNLVTTTTKTTSHSTTSFTSSTVYSTASTYTTAITSVPTTLGTMVTSTSMISSTVSTGIPTSQPTTITPSSVGISGSLPMMTDLTSVYTVSNMSARPTTVIPSSPTVQNTEISISVSMTSATTPSGGPTFTSTENTPTRSLLTSFPMTHSFSSSMSESSAGTTHTESISSPRGTTSTLHTTVESTPSPTTTTSFTTSTMMEPPSSTVSTTGRGQTTFPSSTATFPETTTLTPTTDISTVSLTTAMTSPPPVSSSITPTNTMTSMRTTTYWPTATNTLSPLTSSILSSTPVPSTEMITSHTTNTTPLSTLVTTLLTTITRSTPTSETTYPTSPTSIVSDSTTEITYSTSITGTLSTATTLPPTSSSLPTTETATMTPTTTLITTTPNTTSLSTPSFTSSTIYSTVSTSTTAISSASPTSGTMVTSTTMTPSSLSTDTPSTTPTTITYPSVGSTGFLTTATDLTSTFTVSSSSAMSTSVIPSSPSIQNTETSSLVSMTSATTPSLRPTITSTDSTLTSSLLTTFPSTYSFSSSMSASSAGTTHTETISSLPASTNTIHTTAESALAPTTTTSFTTSPTMEPPSTTVATTGTGQTTFPSSTATFLETTTLTPTTDFSTESLTTAMTSTPPITSSITPTDTMTSMRTTTSWPTATNTLSPLTSSILSSTPVPSTEVTTSHTTNTNPVSTLVTTLPITITRSTLTSETAYPSSPTSTVTESTTEITYPTTMTETSSTATSLPPTSSLVSTAETAKTPTTNLVTTTTKTTSHSTTSFTSSTIYSTASTPTTAITSVPTTLGTMVTSTSMIPSTVSTGIPTSQPTTITPSSVGISGSLPMMTDLTSVYTVSSMSARPTSVIPSSPTVQNTETSIFVSMMSATTPSGGPTFTSTENTPTRSLLTSFPVTHSFSSSMSASSVGTTHTQSISSPPAITSTLHTTAESTPSPTTTMSFTTFTKMETPSSTVATTGTGQTTFTSSTATSPKTTTLTPTSDISTGSFKTAVSSTPPITSSITSTYTVTSMTTTTPLGPTATNTLPSFTSSVSSSTPVPSTEAITSGTTNTTPLSTLVTTFSNSDTSSTPTSETTYPTSLTSALTDSTTRTTYSTNMTGTLSTVTSLRPTSSSLLTTVTATVPTTNLVTTTTKITSHSTPSFTSSIATTETPSHSTPRFTSSITTTETPSHSTPRFTSSITNTKTTSHSSPSFTSSITTTETTSHNTPSLTSSITTTKTTSHSTPSYTSLITTTTTTSHSTPSFTSSITTTETTSHNTPSLTSSITTTETTSHSTPSFTSSITTETTSHSTPSFTSLITITEITSHSTLSYTTSITTTETPSHSTLSFTSSITTTETTSHSTPSFTSSITTSEMPSHSTPSFTSSITTTENATHSTPNFTSSITTTETTSHSTPSFTSLITTTETTSHRWGTTETTSYSTPSFTSSNTITETTSHSTPSYITSITTTETPSSSTPSFSSSITTTETTSHSTPGFTSSITTTETTSHSTPSFTSSITTTETTSHDTPSFTSSITTSETPSHSTPSSTSLITTTKTTSHSTPSFTSSITTTETTSHSAHSFTSSITTTETTSHNTRSFTSSITTTETNSHSTTSFTSSITTTETTSHSTPSFSSSITTTETPLHSTPGLTSWVTTTKTTSHITPGLTSSITTTETTSHSTPGFTSSITTTETTSESTPSLSSSTIYSTVSTSTTAITSHFTTSETAVTPTPVTPSSLSTDIPTTSLRTLTPSSVGTSTSLTTTTDFPSIPTDISTLPTRTHIISSSPSIQSTETSSLVGTTSPTMSTVRMTLRITENTPISSFSTSIVVIPETPTQTPPVLTSATGTQTSPAPTTVTFGSTDSSTSTLHTLTPSTALSTIVSTSQVPIPSTHSSTLQTTPSTPSLQTSLTSTSEFTTESFTRGSTSTNAILTSFSTIIWSSTPTIIMSSSPSSASITPVFSTTIHSVPSSPYIFSTENVGSASITGFPSLSSSATTSTSSTSSSLTTALTEITPFSYISLPSTTPCPGTITITIVPASPTDPCVEMDPSTEATSPPTTPLTVFPFTTEMVTCPTSISIQTTLTTYMDTSSMMPESESSISPNASSSTGTGTVPTNTVFTSTRLPTSETWLSNSSVIPLPLPGVSTIPLTMKPSSSLPTILRTSSKSTHPSPPTTRTSETPVATTQTPTTLTSRRTTRITSQMTTQSTLTTTAGTCDNGGTWEQGQCACLPGFSGDRCQLQTRCQNGGQWDGLKCQCPSTFYGSSCEFAVEQVDLDVVETEVGMEVSVDQQFSPDLNDNTSQAYRDFNKTFWNQMQKIFADMQGFTFKGVEILSLRNGSIVVDYLVLLEMPFSPQLESEYEQVKTTLKEGLQNASQDVNSCQDSQTLCFKPDSIKVNNNSKTELTPAAICRRAAPTGYEEFYFPLVEATRLRCVTKCTSGVDNAIDCHQGQCVLETSGPTCRCYSTDTHWFSGPRCEVAVHWRALVGGLTAGAALLVLLLLALGVRAVRSGWWGGQRRGRSWDQDRKWFETWDEEVVGTFSNWGFEDDGTDKDTNFYVALENVDTTMKVHIKRPEMTSSSV</sequence>